<keyword id="KW-0067">ATP-binding</keyword>
<keyword id="KW-0963">Cytoplasm</keyword>
<keyword id="KW-0227">DNA damage</keyword>
<keyword id="KW-0233">DNA recombination</keyword>
<keyword id="KW-0234">DNA repair</keyword>
<keyword id="KW-0238">DNA-binding</keyword>
<keyword id="KW-0547">Nucleotide-binding</keyword>
<keyword id="KW-0742">SOS response</keyword>
<reference key="1">
    <citation type="journal article" date="2009" name="Genome Res.">
        <title>Whole genome sequence of Desulfovibrio magneticus strain RS-1 revealed common gene clusters in magnetotactic bacteria.</title>
        <authorList>
            <person name="Nakazawa H."/>
            <person name="Arakaki A."/>
            <person name="Narita-Yamada S."/>
            <person name="Yashiro I."/>
            <person name="Jinno K."/>
            <person name="Aoki N."/>
            <person name="Tsuruyama A."/>
            <person name="Okamura Y."/>
            <person name="Tanikawa S."/>
            <person name="Fujita N."/>
            <person name="Takeyama H."/>
            <person name="Matsunaga T."/>
        </authorList>
    </citation>
    <scope>NUCLEOTIDE SEQUENCE [LARGE SCALE GENOMIC DNA]</scope>
    <source>
        <strain>ATCC 700980 / DSM 13731 / RS-1</strain>
    </source>
</reference>
<feature type="chain" id="PRO_1000204704" description="Protein RecA">
    <location>
        <begin position="1"/>
        <end position="355"/>
    </location>
</feature>
<feature type="binding site" evidence="1">
    <location>
        <begin position="73"/>
        <end position="80"/>
    </location>
    <ligand>
        <name>ATP</name>
        <dbReference type="ChEBI" id="CHEBI:30616"/>
    </ligand>
</feature>
<organism>
    <name type="scientific">Solidesulfovibrio magneticus (strain ATCC 700980 / DSM 13731 / RS-1)</name>
    <name type="common">Desulfovibrio magneticus</name>
    <dbReference type="NCBI Taxonomy" id="573370"/>
    <lineage>
        <taxon>Bacteria</taxon>
        <taxon>Pseudomonadati</taxon>
        <taxon>Thermodesulfobacteriota</taxon>
        <taxon>Desulfovibrionia</taxon>
        <taxon>Desulfovibrionales</taxon>
        <taxon>Desulfovibrionaceae</taxon>
        <taxon>Solidesulfovibrio</taxon>
    </lineage>
</organism>
<dbReference type="EMBL" id="AP010904">
    <property type="protein sequence ID" value="BAH77819.1"/>
    <property type="molecule type" value="Genomic_DNA"/>
</dbReference>
<dbReference type="RefSeq" id="WP_015862939.1">
    <property type="nucleotide sequence ID" value="NC_012796.1"/>
</dbReference>
<dbReference type="SMR" id="C4XQT5"/>
<dbReference type="STRING" id="573370.DMR_43280"/>
<dbReference type="KEGG" id="dma:DMR_43280"/>
<dbReference type="eggNOG" id="COG0468">
    <property type="taxonomic scope" value="Bacteria"/>
</dbReference>
<dbReference type="HOGENOM" id="CLU_040469_3_2_7"/>
<dbReference type="OrthoDB" id="9776733at2"/>
<dbReference type="Proteomes" id="UP000009071">
    <property type="component" value="Chromosome"/>
</dbReference>
<dbReference type="GO" id="GO:0005829">
    <property type="term" value="C:cytosol"/>
    <property type="evidence" value="ECO:0007669"/>
    <property type="project" value="TreeGrafter"/>
</dbReference>
<dbReference type="GO" id="GO:0005524">
    <property type="term" value="F:ATP binding"/>
    <property type="evidence" value="ECO:0007669"/>
    <property type="project" value="UniProtKB-UniRule"/>
</dbReference>
<dbReference type="GO" id="GO:0016887">
    <property type="term" value="F:ATP hydrolysis activity"/>
    <property type="evidence" value="ECO:0007669"/>
    <property type="project" value="InterPro"/>
</dbReference>
<dbReference type="GO" id="GO:0140664">
    <property type="term" value="F:ATP-dependent DNA damage sensor activity"/>
    <property type="evidence" value="ECO:0007669"/>
    <property type="project" value="InterPro"/>
</dbReference>
<dbReference type="GO" id="GO:0003684">
    <property type="term" value="F:damaged DNA binding"/>
    <property type="evidence" value="ECO:0007669"/>
    <property type="project" value="UniProtKB-UniRule"/>
</dbReference>
<dbReference type="GO" id="GO:0003697">
    <property type="term" value="F:single-stranded DNA binding"/>
    <property type="evidence" value="ECO:0007669"/>
    <property type="project" value="UniProtKB-UniRule"/>
</dbReference>
<dbReference type="GO" id="GO:0006310">
    <property type="term" value="P:DNA recombination"/>
    <property type="evidence" value="ECO:0007669"/>
    <property type="project" value="UniProtKB-UniRule"/>
</dbReference>
<dbReference type="GO" id="GO:0006281">
    <property type="term" value="P:DNA repair"/>
    <property type="evidence" value="ECO:0007669"/>
    <property type="project" value="UniProtKB-UniRule"/>
</dbReference>
<dbReference type="GO" id="GO:0009432">
    <property type="term" value="P:SOS response"/>
    <property type="evidence" value="ECO:0007669"/>
    <property type="project" value="UniProtKB-UniRule"/>
</dbReference>
<dbReference type="CDD" id="cd00983">
    <property type="entry name" value="RecA"/>
    <property type="match status" value="1"/>
</dbReference>
<dbReference type="FunFam" id="3.40.50.300:FF:000087">
    <property type="entry name" value="Recombinase RecA"/>
    <property type="match status" value="1"/>
</dbReference>
<dbReference type="Gene3D" id="3.40.50.300">
    <property type="entry name" value="P-loop containing nucleotide triphosphate hydrolases"/>
    <property type="match status" value="1"/>
</dbReference>
<dbReference type="HAMAP" id="MF_00268">
    <property type="entry name" value="RecA"/>
    <property type="match status" value="1"/>
</dbReference>
<dbReference type="InterPro" id="IPR003593">
    <property type="entry name" value="AAA+_ATPase"/>
</dbReference>
<dbReference type="InterPro" id="IPR013765">
    <property type="entry name" value="DNA_recomb/repair_RecA"/>
</dbReference>
<dbReference type="InterPro" id="IPR020584">
    <property type="entry name" value="DNA_recomb/repair_RecA_CS"/>
</dbReference>
<dbReference type="InterPro" id="IPR027417">
    <property type="entry name" value="P-loop_NTPase"/>
</dbReference>
<dbReference type="InterPro" id="IPR049261">
    <property type="entry name" value="RecA-like_C"/>
</dbReference>
<dbReference type="InterPro" id="IPR049428">
    <property type="entry name" value="RecA-like_N"/>
</dbReference>
<dbReference type="InterPro" id="IPR020588">
    <property type="entry name" value="RecA_ATP-bd"/>
</dbReference>
<dbReference type="InterPro" id="IPR023400">
    <property type="entry name" value="RecA_C_sf"/>
</dbReference>
<dbReference type="InterPro" id="IPR020587">
    <property type="entry name" value="RecA_monomer-monomer_interface"/>
</dbReference>
<dbReference type="NCBIfam" id="TIGR02012">
    <property type="entry name" value="tigrfam_recA"/>
    <property type="match status" value="1"/>
</dbReference>
<dbReference type="PANTHER" id="PTHR45900:SF1">
    <property type="entry name" value="MITOCHONDRIAL DNA REPAIR PROTEIN RECA HOMOLOG-RELATED"/>
    <property type="match status" value="1"/>
</dbReference>
<dbReference type="PANTHER" id="PTHR45900">
    <property type="entry name" value="RECA"/>
    <property type="match status" value="1"/>
</dbReference>
<dbReference type="Pfam" id="PF00154">
    <property type="entry name" value="RecA"/>
    <property type="match status" value="1"/>
</dbReference>
<dbReference type="Pfam" id="PF21096">
    <property type="entry name" value="RecA_C"/>
    <property type="match status" value="1"/>
</dbReference>
<dbReference type="PRINTS" id="PR00142">
    <property type="entry name" value="RECA"/>
</dbReference>
<dbReference type="SMART" id="SM00382">
    <property type="entry name" value="AAA"/>
    <property type="match status" value="1"/>
</dbReference>
<dbReference type="SUPFAM" id="SSF52540">
    <property type="entry name" value="P-loop containing nucleoside triphosphate hydrolases"/>
    <property type="match status" value="1"/>
</dbReference>
<dbReference type="SUPFAM" id="SSF54752">
    <property type="entry name" value="RecA protein, C-terminal domain"/>
    <property type="match status" value="1"/>
</dbReference>
<dbReference type="PROSITE" id="PS00321">
    <property type="entry name" value="RECA_1"/>
    <property type="match status" value="1"/>
</dbReference>
<dbReference type="PROSITE" id="PS50162">
    <property type="entry name" value="RECA_2"/>
    <property type="match status" value="1"/>
</dbReference>
<dbReference type="PROSITE" id="PS50163">
    <property type="entry name" value="RECA_3"/>
    <property type="match status" value="1"/>
</dbReference>
<comment type="function">
    <text evidence="1">Can catalyze the hydrolysis of ATP in the presence of single-stranded DNA, the ATP-dependent uptake of single-stranded DNA by duplex DNA, and the ATP-dependent hybridization of homologous single-stranded DNAs. It interacts with LexA causing its activation and leading to its autocatalytic cleavage.</text>
</comment>
<comment type="subcellular location">
    <subcellularLocation>
        <location evidence="1">Cytoplasm</location>
    </subcellularLocation>
</comment>
<comment type="similarity">
    <text evidence="1">Belongs to the RecA family.</text>
</comment>
<evidence type="ECO:0000255" key="1">
    <source>
        <dbReference type="HAMAP-Rule" id="MF_00268"/>
    </source>
</evidence>
<protein>
    <recommendedName>
        <fullName evidence="1">Protein RecA</fullName>
    </recommendedName>
    <alternativeName>
        <fullName evidence="1">Recombinase A</fullName>
    </alternativeName>
</protein>
<name>RECA_SOLM1</name>
<proteinExistence type="inferred from homology"/>
<accession>C4XQT5</accession>
<sequence length="355" mass="38438">MAKKPALSPQEFRSEALATALTTIERKHGQGAVMRLEDSAHVKIPAIPTGSIGLDLALGIGGIPKGRITEIYGPESSGKTTLALHIIAESQKLGGTAAFIDAEHALDVNYARRLGVNTPEMLISQPDFGEQALDIADLLVRSGAVDVVVIDSVAALIPQAELEGEMGETQVGGQARLMSHAMRKLTGTIHKSQTSVIFINQIRMKIGMTGYGSPETTTGGNALKFYASVRLDIRRIQTLKDKEETYGSRCRVKVVKNKVAPPFREALFDILYGTGVSREGELIDMGVEAGIVDKSGAWFAFGSERLGQGRDNVRAFLQEHTDIRDQIEGKLREHLGFAEYVPPPSPEVMEEEDGM</sequence>
<gene>
    <name evidence="1" type="primary">recA</name>
    <name type="ordered locus">DMR_43280</name>
</gene>